<name>ISPG_NEIG1</name>
<dbReference type="EC" id="1.17.7.3" evidence="1"/>
<dbReference type="EMBL" id="AE004969">
    <property type="protein sequence ID" value="AAW89324.1"/>
    <property type="molecule type" value="Genomic_DNA"/>
</dbReference>
<dbReference type="RefSeq" id="WP_003688953.1">
    <property type="nucleotide sequence ID" value="NC_002946.2"/>
</dbReference>
<dbReference type="RefSeq" id="YP_207736.1">
    <property type="nucleotide sequence ID" value="NC_002946.2"/>
</dbReference>
<dbReference type="SMR" id="Q5F913"/>
<dbReference type="STRING" id="242231.NGO_0594"/>
<dbReference type="GeneID" id="66752933"/>
<dbReference type="KEGG" id="ngo:NGO_0594"/>
<dbReference type="PATRIC" id="fig|242231.10.peg.703"/>
<dbReference type="HOGENOM" id="CLU_042258_1_0_4"/>
<dbReference type="UniPathway" id="UPA00056">
    <property type="reaction ID" value="UER00096"/>
</dbReference>
<dbReference type="Proteomes" id="UP000000535">
    <property type="component" value="Chromosome"/>
</dbReference>
<dbReference type="GO" id="GO:0051539">
    <property type="term" value="F:4 iron, 4 sulfur cluster binding"/>
    <property type="evidence" value="ECO:0007669"/>
    <property type="project" value="UniProtKB-UniRule"/>
</dbReference>
<dbReference type="GO" id="GO:0046429">
    <property type="term" value="F:4-hydroxy-3-methylbut-2-en-1-yl diphosphate synthase activity (ferredoxin)"/>
    <property type="evidence" value="ECO:0007669"/>
    <property type="project" value="UniProtKB-UniRule"/>
</dbReference>
<dbReference type="GO" id="GO:0141197">
    <property type="term" value="F:4-hydroxy-3-methylbut-2-enyl-diphosphate synthase activity (flavodoxin)"/>
    <property type="evidence" value="ECO:0007669"/>
    <property type="project" value="UniProtKB-EC"/>
</dbReference>
<dbReference type="GO" id="GO:0005506">
    <property type="term" value="F:iron ion binding"/>
    <property type="evidence" value="ECO:0007669"/>
    <property type="project" value="InterPro"/>
</dbReference>
<dbReference type="GO" id="GO:0019288">
    <property type="term" value="P:isopentenyl diphosphate biosynthetic process, methylerythritol 4-phosphate pathway"/>
    <property type="evidence" value="ECO:0007669"/>
    <property type="project" value="UniProtKB-UniRule"/>
</dbReference>
<dbReference type="GO" id="GO:0016114">
    <property type="term" value="P:terpenoid biosynthetic process"/>
    <property type="evidence" value="ECO:0007669"/>
    <property type="project" value="InterPro"/>
</dbReference>
<dbReference type="FunFam" id="3.20.20.20:FF:000001">
    <property type="entry name" value="4-hydroxy-3-methylbut-2-en-1-yl diphosphate synthase (flavodoxin)"/>
    <property type="match status" value="1"/>
</dbReference>
<dbReference type="FunFam" id="3.30.413.10:FF:000012">
    <property type="entry name" value="4-hydroxy-3-methylbut-2-en-1-yl diphosphate synthase (flavodoxin)"/>
    <property type="match status" value="1"/>
</dbReference>
<dbReference type="Gene3D" id="3.20.20.20">
    <property type="entry name" value="Dihydropteroate synthase-like"/>
    <property type="match status" value="1"/>
</dbReference>
<dbReference type="Gene3D" id="3.30.413.10">
    <property type="entry name" value="Sulfite Reductase Hemoprotein, domain 1"/>
    <property type="match status" value="1"/>
</dbReference>
<dbReference type="HAMAP" id="MF_00159">
    <property type="entry name" value="IspG"/>
    <property type="match status" value="1"/>
</dbReference>
<dbReference type="InterPro" id="IPR011005">
    <property type="entry name" value="Dihydropteroate_synth-like_sf"/>
</dbReference>
<dbReference type="InterPro" id="IPR016425">
    <property type="entry name" value="IspG_bac"/>
</dbReference>
<dbReference type="InterPro" id="IPR004588">
    <property type="entry name" value="IspG_bac-typ"/>
</dbReference>
<dbReference type="InterPro" id="IPR045854">
    <property type="entry name" value="NO2/SO3_Rdtase_4Fe4S_sf"/>
</dbReference>
<dbReference type="NCBIfam" id="TIGR00612">
    <property type="entry name" value="ispG_gcpE"/>
    <property type="match status" value="1"/>
</dbReference>
<dbReference type="NCBIfam" id="NF001540">
    <property type="entry name" value="PRK00366.1"/>
    <property type="match status" value="1"/>
</dbReference>
<dbReference type="PANTHER" id="PTHR30454">
    <property type="entry name" value="4-HYDROXY-3-METHYLBUT-2-EN-1-YL DIPHOSPHATE SYNTHASE"/>
    <property type="match status" value="1"/>
</dbReference>
<dbReference type="PANTHER" id="PTHR30454:SF0">
    <property type="entry name" value="4-HYDROXY-3-METHYLBUT-2-EN-1-YL DIPHOSPHATE SYNTHASE (FERREDOXIN), CHLOROPLASTIC"/>
    <property type="match status" value="1"/>
</dbReference>
<dbReference type="Pfam" id="PF04551">
    <property type="entry name" value="GcpE"/>
    <property type="match status" value="1"/>
</dbReference>
<dbReference type="PIRSF" id="PIRSF004640">
    <property type="entry name" value="IspG"/>
    <property type="match status" value="1"/>
</dbReference>
<dbReference type="SUPFAM" id="SSF56014">
    <property type="entry name" value="Nitrite and sulphite reductase 4Fe-4S domain-like"/>
    <property type="match status" value="1"/>
</dbReference>
<keyword id="KW-0004">4Fe-4S</keyword>
<keyword id="KW-0408">Iron</keyword>
<keyword id="KW-0411">Iron-sulfur</keyword>
<keyword id="KW-0414">Isoprene biosynthesis</keyword>
<keyword id="KW-0479">Metal-binding</keyword>
<keyword id="KW-0560">Oxidoreductase</keyword>
<keyword id="KW-1185">Reference proteome</keyword>
<protein>
    <recommendedName>
        <fullName evidence="1">4-hydroxy-3-methylbut-2-en-1-yl diphosphate synthase (flavodoxin)</fullName>
        <ecNumber evidence="1">1.17.7.3</ecNumber>
    </recommendedName>
    <alternativeName>
        <fullName evidence="1">1-hydroxy-2-methyl-2-(E)-butenyl 4-diphosphate synthase</fullName>
    </alternativeName>
</protein>
<feature type="chain" id="PRO_0000190603" description="4-hydroxy-3-methylbut-2-en-1-yl diphosphate synthase (flavodoxin)">
    <location>
        <begin position="1"/>
        <end position="421"/>
    </location>
</feature>
<feature type="binding site" evidence="1">
    <location>
        <position position="298"/>
    </location>
    <ligand>
        <name>[4Fe-4S] cluster</name>
        <dbReference type="ChEBI" id="CHEBI:49883"/>
    </ligand>
</feature>
<feature type="binding site" evidence="1">
    <location>
        <position position="301"/>
    </location>
    <ligand>
        <name>[4Fe-4S] cluster</name>
        <dbReference type="ChEBI" id="CHEBI:49883"/>
    </ligand>
</feature>
<feature type="binding site" evidence="1">
    <location>
        <position position="344"/>
    </location>
    <ligand>
        <name>[4Fe-4S] cluster</name>
        <dbReference type="ChEBI" id="CHEBI:49883"/>
    </ligand>
</feature>
<feature type="binding site" evidence="1">
    <location>
        <position position="351"/>
    </location>
    <ligand>
        <name>[4Fe-4S] cluster</name>
        <dbReference type="ChEBI" id="CHEBI:49883"/>
    </ligand>
</feature>
<evidence type="ECO:0000255" key="1">
    <source>
        <dbReference type="HAMAP-Rule" id="MF_00159"/>
    </source>
</evidence>
<reference key="1">
    <citation type="submission" date="2003-03" db="EMBL/GenBank/DDBJ databases">
        <title>The complete genome sequence of Neisseria gonorrhoeae.</title>
        <authorList>
            <person name="Lewis L.A."/>
            <person name="Gillaspy A.F."/>
            <person name="McLaughlin R.E."/>
            <person name="Gipson M."/>
            <person name="Ducey T.F."/>
            <person name="Ownbey T."/>
            <person name="Hartman K."/>
            <person name="Nydick C."/>
            <person name="Carson M.B."/>
            <person name="Vaughn J."/>
            <person name="Thomson C."/>
            <person name="Song L."/>
            <person name="Lin S."/>
            <person name="Yuan X."/>
            <person name="Najar F."/>
            <person name="Zhan M."/>
            <person name="Ren Q."/>
            <person name="Zhu H."/>
            <person name="Qi S."/>
            <person name="Kenton S.M."/>
            <person name="Lai H."/>
            <person name="White J.D."/>
            <person name="Clifton S."/>
            <person name="Roe B.A."/>
            <person name="Dyer D.W."/>
        </authorList>
    </citation>
    <scope>NUCLEOTIDE SEQUENCE [LARGE SCALE GENOMIC DNA]</scope>
    <source>
        <strain>ATCC 700825 / FA 1090</strain>
    </source>
</reference>
<gene>
    <name evidence="1" type="primary">ispG</name>
    <name type="ordered locus">NGO_0594</name>
</gene>
<organism>
    <name type="scientific">Neisseria gonorrhoeae (strain ATCC 700825 / FA 1090)</name>
    <dbReference type="NCBI Taxonomy" id="242231"/>
    <lineage>
        <taxon>Bacteria</taxon>
        <taxon>Pseudomonadati</taxon>
        <taxon>Pseudomonadota</taxon>
        <taxon>Betaproteobacteria</taxon>
        <taxon>Neisseriales</taxon>
        <taxon>Neisseriaceae</taxon>
        <taxon>Neisseria</taxon>
    </lineage>
</organism>
<comment type="function">
    <text evidence="1">Converts 2C-methyl-D-erythritol 2,4-cyclodiphosphate (ME-2,4cPP) into 1-hydroxy-2-methyl-2-(E)-butenyl 4-diphosphate.</text>
</comment>
<comment type="catalytic activity">
    <reaction evidence="1">
        <text>(2E)-4-hydroxy-3-methylbut-2-enyl diphosphate + oxidized [flavodoxin] + H2O + 2 H(+) = 2-C-methyl-D-erythritol 2,4-cyclic diphosphate + reduced [flavodoxin]</text>
        <dbReference type="Rhea" id="RHEA:43604"/>
        <dbReference type="Rhea" id="RHEA-COMP:10622"/>
        <dbReference type="Rhea" id="RHEA-COMP:10623"/>
        <dbReference type="ChEBI" id="CHEBI:15377"/>
        <dbReference type="ChEBI" id="CHEBI:15378"/>
        <dbReference type="ChEBI" id="CHEBI:57618"/>
        <dbReference type="ChEBI" id="CHEBI:58210"/>
        <dbReference type="ChEBI" id="CHEBI:58483"/>
        <dbReference type="ChEBI" id="CHEBI:128753"/>
        <dbReference type="EC" id="1.17.7.3"/>
    </reaction>
</comment>
<comment type="cofactor">
    <cofactor evidence="1">
        <name>[4Fe-4S] cluster</name>
        <dbReference type="ChEBI" id="CHEBI:49883"/>
    </cofactor>
    <text evidence="1">Binds 1 [4Fe-4S] cluster.</text>
</comment>
<comment type="pathway">
    <text evidence="1">Isoprenoid biosynthesis; isopentenyl diphosphate biosynthesis via DXP pathway; isopentenyl diphosphate from 1-deoxy-D-xylulose 5-phosphate: step 5/6.</text>
</comment>
<comment type="similarity">
    <text evidence="1">Belongs to the IspG family.</text>
</comment>
<accession>Q5F913</accession>
<sequence length="421" mass="45368">MNTLQRRKTHQVLIDHITVGSEAPVVIQSMTNTDTADAKATALQIKELSDAGSEMVRITVNSPEAASKVAEIRRRLDDMGYATPLIGDFHFNGERLLAEFPECGKALSKYRINPGNVGKGVKGDEKFAFMIRTAAENDKAVRIGVNWGSLDQSLAKRMMDANLVSSAPKPPEEVMKEALIVSALESAEKAVLLGLPEDKIILSCKVSAVHDLIQVYRELGSRCVYPLHLGLTEAGMGSKGIVASTAALSVLLQEGIGDTIRISLTPEPGSPRTQEVVVGQEILQTMGLRSFTPMVTACPGCGRTTSTVFQELAQDVQNYLRQKMSIWRTLYPGVESLNVAVMGCVVNGPGESKLADIGISLPGTGETPVAPVYVDGERKVTLKGNNIASEFLAIVEEYVKTNYGKNSSKRNKGKVIPIQSL</sequence>
<proteinExistence type="inferred from homology"/>